<name>EF1A3_MUCCL</name>
<accession>P14865</accession>
<dbReference type="EMBL" id="X17475">
    <property type="protein sequence ID" value="CAA35506.1"/>
    <property type="molecule type" value="Genomic_DNA"/>
</dbReference>
<dbReference type="SMR" id="P14865"/>
<dbReference type="GO" id="GO:0005737">
    <property type="term" value="C:cytoplasm"/>
    <property type="evidence" value="ECO:0007669"/>
    <property type="project" value="UniProtKB-SubCell"/>
</dbReference>
<dbReference type="GO" id="GO:0005525">
    <property type="term" value="F:GTP binding"/>
    <property type="evidence" value="ECO:0007669"/>
    <property type="project" value="UniProtKB-KW"/>
</dbReference>
<dbReference type="GO" id="GO:0003924">
    <property type="term" value="F:GTPase activity"/>
    <property type="evidence" value="ECO:0007669"/>
    <property type="project" value="InterPro"/>
</dbReference>
<dbReference type="GO" id="GO:0003746">
    <property type="term" value="F:translation elongation factor activity"/>
    <property type="evidence" value="ECO:0007669"/>
    <property type="project" value="UniProtKB-KW"/>
</dbReference>
<dbReference type="CDD" id="cd01883">
    <property type="entry name" value="EF1_alpha"/>
    <property type="match status" value="1"/>
</dbReference>
<dbReference type="CDD" id="cd03693">
    <property type="entry name" value="EF1_alpha_II"/>
    <property type="match status" value="1"/>
</dbReference>
<dbReference type="CDD" id="cd03705">
    <property type="entry name" value="EF1_alpha_III"/>
    <property type="match status" value="1"/>
</dbReference>
<dbReference type="FunFam" id="2.40.30.10:FF:000003">
    <property type="entry name" value="Elongation factor 1-alpha"/>
    <property type="match status" value="1"/>
</dbReference>
<dbReference type="FunFam" id="2.40.30.10:FF:000005">
    <property type="entry name" value="Elongation factor 1-alpha"/>
    <property type="match status" value="1"/>
</dbReference>
<dbReference type="FunFam" id="3.40.50.300:FF:000211">
    <property type="entry name" value="Elongation factor 1-alpha"/>
    <property type="match status" value="1"/>
</dbReference>
<dbReference type="Gene3D" id="3.40.50.300">
    <property type="entry name" value="P-loop containing nucleotide triphosphate hydrolases"/>
    <property type="match status" value="1"/>
</dbReference>
<dbReference type="Gene3D" id="2.40.30.10">
    <property type="entry name" value="Translation factors"/>
    <property type="match status" value="2"/>
</dbReference>
<dbReference type="InterPro" id="IPR004161">
    <property type="entry name" value="EFTu-like_2"/>
</dbReference>
<dbReference type="InterPro" id="IPR031157">
    <property type="entry name" value="G_TR_CS"/>
</dbReference>
<dbReference type="InterPro" id="IPR054696">
    <property type="entry name" value="GTP-eEF1A_C"/>
</dbReference>
<dbReference type="InterPro" id="IPR027417">
    <property type="entry name" value="P-loop_NTPase"/>
</dbReference>
<dbReference type="InterPro" id="IPR000795">
    <property type="entry name" value="T_Tr_GTP-bd_dom"/>
</dbReference>
<dbReference type="InterPro" id="IPR050100">
    <property type="entry name" value="TRAFAC_GTPase_members"/>
</dbReference>
<dbReference type="InterPro" id="IPR009000">
    <property type="entry name" value="Transl_B-barrel_sf"/>
</dbReference>
<dbReference type="InterPro" id="IPR009001">
    <property type="entry name" value="Transl_elong_EF1A/Init_IF2_C"/>
</dbReference>
<dbReference type="InterPro" id="IPR004539">
    <property type="entry name" value="Transl_elong_EF1A_euk/arc"/>
</dbReference>
<dbReference type="NCBIfam" id="TIGR00483">
    <property type="entry name" value="EF-1_alpha"/>
    <property type="match status" value="1"/>
</dbReference>
<dbReference type="NCBIfam" id="NF008969">
    <property type="entry name" value="PRK12317.1"/>
    <property type="match status" value="1"/>
</dbReference>
<dbReference type="PANTHER" id="PTHR23115">
    <property type="entry name" value="TRANSLATION FACTOR"/>
    <property type="match status" value="1"/>
</dbReference>
<dbReference type="Pfam" id="PF22594">
    <property type="entry name" value="GTP-eEF1A_C"/>
    <property type="match status" value="1"/>
</dbReference>
<dbReference type="Pfam" id="PF00009">
    <property type="entry name" value="GTP_EFTU"/>
    <property type="match status" value="1"/>
</dbReference>
<dbReference type="Pfam" id="PF03144">
    <property type="entry name" value="GTP_EFTU_D2"/>
    <property type="match status" value="1"/>
</dbReference>
<dbReference type="PRINTS" id="PR00315">
    <property type="entry name" value="ELONGATNFCT"/>
</dbReference>
<dbReference type="SUPFAM" id="SSF50465">
    <property type="entry name" value="EF-Tu/eEF-1alpha/eIF2-gamma C-terminal domain"/>
    <property type="match status" value="1"/>
</dbReference>
<dbReference type="SUPFAM" id="SSF52540">
    <property type="entry name" value="P-loop containing nucleoside triphosphate hydrolases"/>
    <property type="match status" value="1"/>
</dbReference>
<dbReference type="SUPFAM" id="SSF50447">
    <property type="entry name" value="Translation proteins"/>
    <property type="match status" value="1"/>
</dbReference>
<dbReference type="PROSITE" id="PS00301">
    <property type="entry name" value="G_TR_1"/>
    <property type="match status" value="1"/>
</dbReference>
<dbReference type="PROSITE" id="PS51722">
    <property type="entry name" value="G_TR_2"/>
    <property type="match status" value="1"/>
</dbReference>
<proteinExistence type="inferred from homology"/>
<organism>
    <name type="scientific">Mucor circinelloides f. lusitanicus</name>
    <name type="common">Mucor racemosus var. lusitanicus</name>
    <dbReference type="NCBI Taxonomy" id="29924"/>
    <lineage>
        <taxon>Eukaryota</taxon>
        <taxon>Fungi</taxon>
        <taxon>Fungi incertae sedis</taxon>
        <taxon>Mucoromycota</taxon>
        <taxon>Mucoromycotina</taxon>
        <taxon>Mucoromycetes</taxon>
        <taxon>Mucorales</taxon>
        <taxon>Mucorineae</taxon>
        <taxon>Mucoraceae</taxon>
        <taxon>Mucor</taxon>
    </lineage>
</organism>
<evidence type="ECO:0000250" key="1"/>
<evidence type="ECO:0000250" key="2">
    <source>
        <dbReference type="UniProtKB" id="P02994"/>
    </source>
</evidence>
<evidence type="ECO:0000255" key="3">
    <source>
        <dbReference type="PROSITE-ProRule" id="PRU01059"/>
    </source>
</evidence>
<comment type="function">
    <text>This protein promotes the GTP-dependent binding of aminoacyl-tRNA to the A-site of ribosomes during protein biosynthesis.</text>
</comment>
<comment type="subcellular location">
    <subcellularLocation>
        <location>Cytoplasm</location>
    </subcellularLocation>
</comment>
<comment type="similarity">
    <text evidence="3">Belongs to the TRAFAC class translation factor GTPase superfamily. Classic translation factor GTPase family. EF-Tu/EF-1A subfamily.</text>
</comment>
<sequence length="457" mass="49836">MGKEKTHVNVVVIGHVDSGKSTTTGHLIYKCGGIDKRTIEKFEKEAAELGKGSFKYAWVLDKLKAERERGITIDIALWKFETPKYNVTVIDAPGHRDFIKNMITGTSQADCAILIIAGGTGEFEAGISKDGQTREHALLAFTLGVRQLIVAINKMDTTKWSQDRYNEIVKEVSGFIKKIGFNPKSVPFVPISGWHGDNMLDESTNMPWFKGWNKETKAGSKTGKTLLEAIDAIEPPVRPSDKPLRLPLQDVYKIGGIGTVPVGRVETGTIKAGMVVNFAPAAVTTEVKSVEMHHETLTEGLPGDNVGFNVKNVSVKDIRRGNVCSDSKNDPAKESASFTAQVIILNHPGQISAGYAPVLDCHTAHIACKFSELIEKIDRRSEKMEDSPKFVKSGDSAIVKMVPSKPMCVEAYTDYPPLGRFAVRDMRQTVAVGVIKAVEKVDKAGKVTKAAAKASKK</sequence>
<keyword id="KW-0963">Cytoplasm</keyword>
<keyword id="KW-0251">Elongation factor</keyword>
<keyword id="KW-0342">GTP-binding</keyword>
<keyword id="KW-0488">Methylation</keyword>
<keyword id="KW-0547">Nucleotide-binding</keyword>
<keyword id="KW-0648">Protein biosynthesis</keyword>
<gene>
    <name type="primary">TEF-3</name>
</gene>
<reference key="1">
    <citation type="journal article" date="1987" name="Nucleic Acids Res.">
        <title>Sequence analysis of the EF-1 alpha gene family of Mucor racemosus.</title>
        <authorList>
            <person name="Sundstrom P."/>
            <person name="Lira L.M."/>
            <person name="Choi D."/>
            <person name="Linz J.E."/>
            <person name="Sypherd P.S."/>
        </authorList>
    </citation>
    <scope>NUCLEOTIDE SEQUENCE [GENOMIC DNA]</scope>
    <source>
        <strain>ATCC 1216b / BCRC 32522 / CBS 277.49 / NRRL 3631</strain>
    </source>
</reference>
<reference key="2">
    <citation type="submission" date="1990-01" db="EMBL/GenBank/DDBJ databases">
        <authorList>
            <person name="Sundstrom P."/>
        </authorList>
    </citation>
    <scope>SEQUENCE REVISION</scope>
</reference>
<feature type="initiator methionine" description="Removed" evidence="2">
    <location>
        <position position="1"/>
    </location>
</feature>
<feature type="chain" id="PRO_0000090966" description="Elongation factor 1-alpha">
    <location>
        <begin position="2"/>
        <end position="457"/>
    </location>
</feature>
<feature type="domain" description="tr-type G" evidence="3">
    <location>
        <begin position="5"/>
        <end position="240"/>
    </location>
</feature>
<feature type="region of interest" description="G1" evidence="3">
    <location>
        <begin position="14"/>
        <end position="21"/>
    </location>
</feature>
<feature type="region of interest" description="G2" evidence="3">
    <location>
        <begin position="70"/>
        <end position="74"/>
    </location>
</feature>
<feature type="region of interest" description="G3" evidence="3">
    <location>
        <begin position="91"/>
        <end position="94"/>
    </location>
</feature>
<feature type="region of interest" description="G4" evidence="3">
    <location>
        <begin position="153"/>
        <end position="156"/>
    </location>
</feature>
<feature type="region of interest" description="G5" evidence="3">
    <location>
        <begin position="192"/>
        <end position="194"/>
    </location>
</feature>
<feature type="binding site" evidence="1">
    <location>
        <begin position="14"/>
        <end position="21"/>
    </location>
    <ligand>
        <name>GTP</name>
        <dbReference type="ChEBI" id="CHEBI:37565"/>
    </ligand>
</feature>
<feature type="binding site" evidence="1">
    <location>
        <begin position="91"/>
        <end position="95"/>
    </location>
    <ligand>
        <name>GTP</name>
        <dbReference type="ChEBI" id="CHEBI:37565"/>
    </ligand>
</feature>
<feature type="binding site" evidence="1">
    <location>
        <begin position="153"/>
        <end position="156"/>
    </location>
    <ligand>
        <name>GTP</name>
        <dbReference type="ChEBI" id="CHEBI:37565"/>
    </ligand>
</feature>
<feature type="modified residue" description="N,N,N-trimethylglycine" evidence="2">
    <location>
        <position position="2"/>
    </location>
</feature>
<feature type="modified residue" description="N6,N6-dimethyllysine; alternate" evidence="2">
    <location>
        <position position="3"/>
    </location>
</feature>
<feature type="modified residue" description="N6-methyllysine; alternate" evidence="2">
    <location>
        <position position="3"/>
    </location>
</feature>
<feature type="modified residue" description="N6-methyllysine" evidence="2">
    <location>
        <position position="30"/>
    </location>
</feature>
<feature type="modified residue" description="N6,N6,N6-trimethyllysine" evidence="2">
    <location>
        <position position="79"/>
    </location>
</feature>
<feature type="modified residue" description="N6,N6-dimethyllysine; alternate" evidence="2">
    <location>
        <position position="316"/>
    </location>
</feature>
<feature type="modified residue" description="N6-methyllysine; alternate" evidence="2">
    <location>
        <position position="316"/>
    </location>
</feature>
<feature type="modified residue" description="N6-methyllysine" evidence="2">
    <location>
        <position position="389"/>
    </location>
</feature>
<protein>
    <recommendedName>
        <fullName>Elongation factor 1-alpha</fullName>
        <shortName>EF-1-alpha</shortName>
    </recommendedName>
</protein>